<feature type="signal peptide" evidence="2">
    <location>
        <begin position="1"/>
        <end position="20"/>
    </location>
</feature>
<feature type="propeptide" id="PRO_0000340308" evidence="1">
    <location>
        <begin position="21"/>
        <end position="191"/>
    </location>
</feature>
<feature type="chain" id="PRO_0000340309" description="Zinc metalloproteinase-disintegrin-like stejnihagin-B">
    <location>
        <begin position="192"/>
        <end position="600"/>
    </location>
</feature>
<feature type="domain" description="Peptidase M12B" evidence="4">
    <location>
        <begin position="198"/>
        <end position="389"/>
    </location>
</feature>
<feature type="domain" description="Disintegrin" evidence="3">
    <location>
        <begin position="397"/>
        <end position="483"/>
    </location>
</feature>
<feature type="short sequence motif" description="D/ECD-tripeptide">
    <location>
        <begin position="461"/>
        <end position="463"/>
    </location>
</feature>
<feature type="active site" evidence="4 5">
    <location>
        <position position="332"/>
    </location>
</feature>
<feature type="binding site" evidence="1">
    <location>
        <position position="331"/>
    </location>
    <ligand>
        <name>Zn(2+)</name>
        <dbReference type="ChEBI" id="CHEBI:29105"/>
        <note>catalytic</note>
    </ligand>
</feature>
<feature type="binding site" evidence="1">
    <location>
        <position position="335"/>
    </location>
    <ligand>
        <name>Zn(2+)</name>
        <dbReference type="ChEBI" id="CHEBI:29105"/>
        <note>catalytic</note>
    </ligand>
</feature>
<feature type="binding site" evidence="1">
    <location>
        <position position="341"/>
    </location>
    <ligand>
        <name>Zn(2+)</name>
        <dbReference type="ChEBI" id="CHEBI:29105"/>
        <note>catalytic</note>
    </ligand>
</feature>
<feature type="binding site" evidence="1">
    <location>
        <position position="399"/>
    </location>
    <ligand>
        <name>Ca(2+)</name>
        <dbReference type="ChEBI" id="CHEBI:29108"/>
    </ligand>
</feature>
<feature type="binding site" evidence="1">
    <location>
        <position position="402"/>
    </location>
    <ligand>
        <name>Ca(2+)</name>
        <dbReference type="ChEBI" id="CHEBI:29108"/>
    </ligand>
</feature>
<feature type="binding site" evidence="1">
    <location>
        <position position="404"/>
    </location>
    <ligand>
        <name>Ca(2+)</name>
        <dbReference type="ChEBI" id="CHEBI:29108"/>
    </ligand>
</feature>
<feature type="binding site" evidence="1">
    <location>
        <position position="406"/>
    </location>
    <ligand>
        <name>Ca(2+)</name>
        <dbReference type="ChEBI" id="CHEBI:29108"/>
    </ligand>
</feature>
<feature type="binding site" evidence="1">
    <location>
        <position position="409"/>
    </location>
    <ligand>
        <name>Ca(2+)</name>
        <dbReference type="ChEBI" id="CHEBI:29108"/>
    </ligand>
</feature>
<feature type="binding site" evidence="1">
    <location>
        <position position="412"/>
    </location>
    <ligand>
        <name>Ca(2+)</name>
        <dbReference type="ChEBI" id="CHEBI:29108"/>
    </ligand>
</feature>
<feature type="modified residue" description="Pyrrolidone carboxylic acid" evidence="1">
    <location>
        <position position="192"/>
    </location>
</feature>
<feature type="glycosylation site" description="N-linked (GlcNAc...) asparagine" evidence="2">
    <location>
        <position position="261"/>
    </location>
</feature>
<feature type="glycosylation site" description="N-linked (GlcNAc...) asparagine" evidence="2">
    <location>
        <position position="317"/>
    </location>
</feature>
<feature type="glycosylation site" description="N-linked (GlcNAc...) asparagine" evidence="2">
    <location>
        <position position="425"/>
    </location>
</feature>
<feature type="glycosylation site" description="N-linked (GlcNAc...) asparagine" evidence="2">
    <location>
        <position position="467"/>
    </location>
</feature>
<feature type="glycosylation site" description="N-linked (GlcNAc...) asparagine" evidence="2">
    <location>
        <position position="513"/>
    </location>
</feature>
<feature type="disulfide bond" evidence="1">
    <location>
        <begin position="306"/>
        <end position="384"/>
    </location>
</feature>
<feature type="disulfide bond" evidence="1">
    <location>
        <begin position="346"/>
        <end position="368"/>
    </location>
</feature>
<feature type="disulfide bond" evidence="1">
    <location>
        <begin position="348"/>
        <end position="351"/>
    </location>
</feature>
<feature type="disulfide bond" evidence="1">
    <location>
        <begin position="400"/>
        <end position="429"/>
    </location>
</feature>
<feature type="disulfide bond" evidence="1">
    <location>
        <begin position="411"/>
        <end position="424"/>
    </location>
</feature>
<feature type="disulfide bond" evidence="1">
    <location>
        <begin position="413"/>
        <end position="419"/>
    </location>
</feature>
<feature type="disulfide bond" evidence="1">
    <location>
        <begin position="423"/>
        <end position="446"/>
    </location>
</feature>
<feature type="disulfide bond" evidence="1">
    <location>
        <begin position="437"/>
        <end position="443"/>
    </location>
</feature>
<feature type="disulfide bond" evidence="1">
    <location>
        <begin position="442"/>
        <end position="468"/>
    </location>
</feature>
<feature type="disulfide bond" evidence="1">
    <location>
        <begin position="455"/>
        <end position="475"/>
    </location>
</feature>
<feature type="disulfide bond" evidence="1">
    <location>
        <begin position="462"/>
        <end position="494"/>
    </location>
</feature>
<feature type="disulfide bond" evidence="1">
    <location>
        <begin position="487"/>
        <end position="499"/>
    </location>
</feature>
<feature type="disulfide bond" evidence="1">
    <location>
        <begin position="506"/>
        <end position="556"/>
    </location>
</feature>
<feature type="disulfide bond" evidence="1">
    <location>
        <begin position="521"/>
        <end position="565"/>
    </location>
</feature>
<feature type="disulfide bond" evidence="1">
    <location>
        <begin position="534"/>
        <end position="544"/>
    </location>
</feature>
<feature type="disulfide bond" evidence="1">
    <location>
        <begin position="551"/>
        <end position="587"/>
    </location>
</feature>
<feature type="disulfide bond" evidence="1">
    <location>
        <begin position="581"/>
        <end position="593"/>
    </location>
</feature>
<dbReference type="EC" id="3.4.24.-"/>
<dbReference type="EMBL" id="DQ195153">
    <property type="protein sequence ID" value="ABA40759.1"/>
    <property type="molecule type" value="mRNA"/>
</dbReference>
<dbReference type="SMR" id="Q3HTN2"/>
<dbReference type="MEROPS" id="M12.154"/>
<dbReference type="GO" id="GO:0005576">
    <property type="term" value="C:extracellular region"/>
    <property type="evidence" value="ECO:0007669"/>
    <property type="project" value="UniProtKB-SubCell"/>
</dbReference>
<dbReference type="GO" id="GO:0005886">
    <property type="term" value="C:plasma membrane"/>
    <property type="evidence" value="ECO:0007669"/>
    <property type="project" value="TreeGrafter"/>
</dbReference>
<dbReference type="GO" id="GO:0046872">
    <property type="term" value="F:metal ion binding"/>
    <property type="evidence" value="ECO:0007669"/>
    <property type="project" value="UniProtKB-KW"/>
</dbReference>
<dbReference type="GO" id="GO:0004222">
    <property type="term" value="F:metalloendopeptidase activity"/>
    <property type="evidence" value="ECO:0007669"/>
    <property type="project" value="InterPro"/>
</dbReference>
<dbReference type="GO" id="GO:0090729">
    <property type="term" value="F:toxin activity"/>
    <property type="evidence" value="ECO:0007669"/>
    <property type="project" value="UniProtKB-KW"/>
</dbReference>
<dbReference type="GO" id="GO:0006508">
    <property type="term" value="P:proteolysis"/>
    <property type="evidence" value="ECO:0007669"/>
    <property type="project" value="UniProtKB-KW"/>
</dbReference>
<dbReference type="CDD" id="cd04269">
    <property type="entry name" value="ZnMc_adamalysin_II_like"/>
    <property type="match status" value="1"/>
</dbReference>
<dbReference type="FunFam" id="3.40.390.10:FF:000002">
    <property type="entry name" value="Disintegrin and metalloproteinase domain-containing protein 22"/>
    <property type="match status" value="1"/>
</dbReference>
<dbReference type="FunFam" id="4.10.70.10:FF:000001">
    <property type="entry name" value="Disintegrin and metalloproteinase domain-containing protein 22"/>
    <property type="match status" value="1"/>
</dbReference>
<dbReference type="Gene3D" id="3.40.390.10">
    <property type="entry name" value="Collagenase (Catalytic Domain)"/>
    <property type="match status" value="1"/>
</dbReference>
<dbReference type="Gene3D" id="4.10.70.10">
    <property type="entry name" value="Disintegrin domain"/>
    <property type="match status" value="1"/>
</dbReference>
<dbReference type="InterPro" id="IPR006586">
    <property type="entry name" value="ADAM_Cys-rich"/>
</dbReference>
<dbReference type="InterPro" id="IPR018358">
    <property type="entry name" value="Disintegrin_CS"/>
</dbReference>
<dbReference type="InterPro" id="IPR001762">
    <property type="entry name" value="Disintegrin_dom"/>
</dbReference>
<dbReference type="InterPro" id="IPR036436">
    <property type="entry name" value="Disintegrin_dom_sf"/>
</dbReference>
<dbReference type="InterPro" id="IPR024079">
    <property type="entry name" value="MetalloPept_cat_dom_sf"/>
</dbReference>
<dbReference type="InterPro" id="IPR001590">
    <property type="entry name" value="Peptidase_M12B"/>
</dbReference>
<dbReference type="InterPro" id="IPR002870">
    <property type="entry name" value="Peptidase_M12B_N"/>
</dbReference>
<dbReference type="InterPro" id="IPR034027">
    <property type="entry name" value="Reprolysin_adamalysin"/>
</dbReference>
<dbReference type="PANTHER" id="PTHR11905">
    <property type="entry name" value="ADAM A DISINTEGRIN AND METALLOPROTEASE DOMAIN"/>
    <property type="match status" value="1"/>
</dbReference>
<dbReference type="PANTHER" id="PTHR11905:SF32">
    <property type="entry name" value="DISINTEGRIN AND METALLOPROTEINASE DOMAIN-CONTAINING PROTEIN 28"/>
    <property type="match status" value="1"/>
</dbReference>
<dbReference type="Pfam" id="PF08516">
    <property type="entry name" value="ADAM_CR"/>
    <property type="match status" value="1"/>
</dbReference>
<dbReference type="Pfam" id="PF00200">
    <property type="entry name" value="Disintegrin"/>
    <property type="match status" value="1"/>
</dbReference>
<dbReference type="Pfam" id="PF01562">
    <property type="entry name" value="Pep_M12B_propep"/>
    <property type="match status" value="1"/>
</dbReference>
<dbReference type="Pfam" id="PF01421">
    <property type="entry name" value="Reprolysin"/>
    <property type="match status" value="1"/>
</dbReference>
<dbReference type="PRINTS" id="PR00289">
    <property type="entry name" value="DISINTEGRIN"/>
</dbReference>
<dbReference type="SMART" id="SM00608">
    <property type="entry name" value="ACR"/>
    <property type="match status" value="1"/>
</dbReference>
<dbReference type="SMART" id="SM00050">
    <property type="entry name" value="DISIN"/>
    <property type="match status" value="1"/>
</dbReference>
<dbReference type="SUPFAM" id="SSF57552">
    <property type="entry name" value="Blood coagulation inhibitor (disintegrin)"/>
    <property type="match status" value="1"/>
</dbReference>
<dbReference type="SUPFAM" id="SSF55486">
    <property type="entry name" value="Metalloproteases ('zincins'), catalytic domain"/>
    <property type="match status" value="1"/>
</dbReference>
<dbReference type="PROSITE" id="PS50215">
    <property type="entry name" value="ADAM_MEPRO"/>
    <property type="match status" value="1"/>
</dbReference>
<dbReference type="PROSITE" id="PS00427">
    <property type="entry name" value="DISINTEGRIN_1"/>
    <property type="match status" value="1"/>
</dbReference>
<dbReference type="PROSITE" id="PS50214">
    <property type="entry name" value="DISINTEGRIN_2"/>
    <property type="match status" value="1"/>
</dbReference>
<dbReference type="PROSITE" id="PS00142">
    <property type="entry name" value="ZINC_PROTEASE"/>
    <property type="match status" value="1"/>
</dbReference>
<proteinExistence type="evidence at transcript level"/>
<organism>
    <name type="scientific">Trimeresurus stejnegeri</name>
    <name type="common">Chinese green tree viper</name>
    <name type="synonym">Viridovipera stejnegeri</name>
    <dbReference type="NCBI Taxonomy" id="39682"/>
    <lineage>
        <taxon>Eukaryota</taxon>
        <taxon>Metazoa</taxon>
        <taxon>Chordata</taxon>
        <taxon>Craniata</taxon>
        <taxon>Vertebrata</taxon>
        <taxon>Euteleostomi</taxon>
        <taxon>Lepidosauria</taxon>
        <taxon>Squamata</taxon>
        <taxon>Bifurcata</taxon>
        <taxon>Unidentata</taxon>
        <taxon>Episquamata</taxon>
        <taxon>Toxicofera</taxon>
        <taxon>Serpentes</taxon>
        <taxon>Colubroidea</taxon>
        <taxon>Viperidae</taxon>
        <taxon>Crotalinae</taxon>
        <taxon>Trimeresurus</taxon>
    </lineage>
</organism>
<sequence>MIEVLLVTICLAVFPYQGSSIILESGNVNDYEVVYPRKVTAVPKGAVQQKYEDAMQYEFKVNGEPVVLHLEKNKELFSEDYSETHYSPDGREITTYPSVEDHCYYHGRIQNEADSTASISACNGLKGHFKLQGETYLIEPLKLPDSEAHAVFKYENVEKEEEAPKMCGVTETNWKSDEPIKKASQLVVTAEQQRFPRRYVKLAIVADHRMYTKHKKNLKPWVFQMVNSVHQIYRSMNVLIALVYLNIWKKNDKITAQSASNVTLDLFGNWRETVLLKRKRHDCAQLLTAIDFDGPTIGRAHVSSVCDPKRSTGIVQNYTEINLVNAVIMAHELGHNLGMDHDGNQCNCHACIMSAVINNPPSERFSGCSMGYYQTFLTAYNPQCILNALSKRDIITPPVCGNELLEEGEECDCGSPENCQYQCCNATTCKLHSWVECESGECCEQCRFKKAGAVCRAARTECDIPENCTDQSADCPTDSFHRNGQPCLYNHGYCYNGNCPVMHYQCYGLFGPNATVGQDGCFDANDRGDEYFYCRKENEKYIPCAQEDVKCGRLFCTYIYDINLCRYDYSANGMVAQGTKCADGKVCNSNRQCADVNTAY</sequence>
<comment type="function">
    <text evidence="1">This metalloproteinase-disintegrin-like impairs hemostasis in the envenomed animal.</text>
</comment>
<comment type="cofactor">
    <cofactor evidence="1">
        <name>Zn(2+)</name>
        <dbReference type="ChEBI" id="CHEBI:29105"/>
    </cofactor>
    <text evidence="1">Binds 1 zinc ion per subunit.</text>
</comment>
<comment type="subunit">
    <text evidence="1">Monomer.</text>
</comment>
<comment type="subcellular location">
    <subcellularLocation>
        <location evidence="1">Secreted</location>
    </subcellularLocation>
</comment>
<comment type="tissue specificity">
    <text>Expressed by the venom gland.</text>
</comment>
<comment type="similarity">
    <text evidence="6">Belongs to the venom metalloproteinase (M12B) family. P-III subfamily. P-IIIa sub-subfamily.</text>
</comment>
<protein>
    <recommendedName>
        <fullName>Zinc metalloproteinase-disintegrin-like stejnihagin-B</fullName>
        <ecNumber>3.4.24.-</ecNumber>
    </recommendedName>
    <alternativeName>
        <fullName>Snake venom metalloproteinase</fullName>
        <shortName>SVMP</shortName>
    </alternativeName>
</protein>
<keyword id="KW-0106">Calcium</keyword>
<keyword id="KW-1217">Cell adhesion impairing toxin</keyword>
<keyword id="KW-1015">Disulfide bond</keyword>
<keyword id="KW-0325">Glycoprotein</keyword>
<keyword id="KW-1199">Hemostasis impairing toxin</keyword>
<keyword id="KW-0378">Hydrolase</keyword>
<keyword id="KW-0479">Metal-binding</keyword>
<keyword id="KW-0482">Metalloprotease</keyword>
<keyword id="KW-0645">Protease</keyword>
<keyword id="KW-0873">Pyrrolidone carboxylic acid</keyword>
<keyword id="KW-0964">Secreted</keyword>
<keyword id="KW-0732">Signal</keyword>
<keyword id="KW-0800">Toxin</keyword>
<keyword id="KW-0862">Zinc</keyword>
<keyword id="KW-0865">Zymogen</keyword>
<name>VM3SB_TRIST</name>
<evidence type="ECO:0000250" key="1"/>
<evidence type="ECO:0000255" key="2"/>
<evidence type="ECO:0000255" key="3">
    <source>
        <dbReference type="PROSITE-ProRule" id="PRU00068"/>
    </source>
</evidence>
<evidence type="ECO:0000255" key="4">
    <source>
        <dbReference type="PROSITE-ProRule" id="PRU00276"/>
    </source>
</evidence>
<evidence type="ECO:0000255" key="5">
    <source>
        <dbReference type="PROSITE-ProRule" id="PRU10095"/>
    </source>
</evidence>
<evidence type="ECO:0000305" key="6"/>
<accession>Q3HTN2</accession>
<reference key="1">
    <citation type="journal article" date="2006" name="Toxicon">
        <title>Cloning of two novel P-III class metalloproteinases from Trimeresurus stejnegeri venom gland.</title>
        <authorList>
            <person name="Wan S.-G."/>
            <person name="Jin Y."/>
            <person name="Lee W.-H."/>
            <person name="Zhang Y."/>
        </authorList>
    </citation>
    <scope>NUCLEOTIDE SEQUENCE [MRNA]</scope>
    <source>
        <tissue>Venom gland</tissue>
    </source>
</reference>